<dbReference type="EMBL" id="L02320">
    <property type="protein sequence ID" value="AAA36541.1"/>
    <property type="molecule type" value="mRNA"/>
</dbReference>
<dbReference type="EMBL" id="AK316061">
    <property type="protein sequence ID" value="BAH14432.1"/>
    <property type="molecule type" value="mRNA"/>
</dbReference>
<dbReference type="EMBL" id="DQ916738">
    <property type="protein sequence ID" value="ABI34710.1"/>
    <property type="molecule type" value="mRNA"/>
</dbReference>
<dbReference type="EMBL" id="DQ916739">
    <property type="protein sequence ID" value="ABI34711.1"/>
    <property type="molecule type" value="mRNA"/>
</dbReference>
<dbReference type="EMBL" id="DQ916741">
    <property type="protein sequence ID" value="ABI34713.1"/>
    <property type="molecule type" value="mRNA"/>
</dbReference>
<dbReference type="EMBL" id="DQ916742">
    <property type="protein sequence ID" value="ABI34714.1"/>
    <property type="molecule type" value="mRNA"/>
</dbReference>
<dbReference type="EMBL" id="DQ916740">
    <property type="protein sequence ID" value="ABI34712.1"/>
    <property type="molecule type" value="mRNA"/>
</dbReference>
<dbReference type="EMBL" id="AP000901">
    <property type="status" value="NOT_ANNOTATED_CDS"/>
    <property type="molecule type" value="Genomic_DNA"/>
</dbReference>
<dbReference type="EMBL" id="AP002788">
    <property type="status" value="NOT_ANNOTATED_CDS"/>
    <property type="molecule type" value="Genomic_DNA"/>
</dbReference>
<dbReference type="EMBL" id="CH471065">
    <property type="protein sequence ID" value="EAW67129.1"/>
    <property type="molecule type" value="Genomic_DNA"/>
</dbReference>
<dbReference type="EMBL" id="BC047109">
    <property type="protein sequence ID" value="AAH47109.1"/>
    <property type="molecule type" value="mRNA"/>
</dbReference>
<dbReference type="CCDS" id="CCDS58171.1">
    <molecule id="P35241-2"/>
</dbReference>
<dbReference type="CCDS" id="CCDS58172.1">
    <molecule id="P35241-4"/>
</dbReference>
<dbReference type="CCDS" id="CCDS58173.1">
    <molecule id="P35241-3"/>
</dbReference>
<dbReference type="CCDS" id="CCDS58174.1">
    <molecule id="P35241-5"/>
</dbReference>
<dbReference type="CCDS" id="CCDS8343.1">
    <molecule id="P35241-1"/>
</dbReference>
<dbReference type="PIR" id="A46127">
    <property type="entry name" value="A46127"/>
</dbReference>
<dbReference type="RefSeq" id="NP_001247421.1">
    <molecule id="P35241-5"/>
    <property type="nucleotide sequence ID" value="NM_001260492.2"/>
</dbReference>
<dbReference type="RefSeq" id="NP_001247422.1">
    <molecule id="P35241-5"/>
    <property type="nucleotide sequence ID" value="NM_001260493.2"/>
</dbReference>
<dbReference type="RefSeq" id="NP_001247423.1">
    <molecule id="P35241-4"/>
    <property type="nucleotide sequence ID" value="NM_001260494.2"/>
</dbReference>
<dbReference type="RefSeq" id="NP_001247424.1">
    <molecule id="P35241-2"/>
    <property type="nucleotide sequence ID" value="NM_001260495.2"/>
</dbReference>
<dbReference type="RefSeq" id="NP_001247425.1">
    <molecule id="P35241-3"/>
    <property type="nucleotide sequence ID" value="NM_001260496.2"/>
</dbReference>
<dbReference type="RefSeq" id="NP_002897.1">
    <molecule id="P35241-1"/>
    <property type="nucleotide sequence ID" value="NM_002906.4"/>
</dbReference>
<dbReference type="RefSeq" id="XP_047283346.1">
    <molecule id="P35241-1"/>
    <property type="nucleotide sequence ID" value="XM_047427390.1"/>
</dbReference>
<dbReference type="RefSeq" id="XP_054225575.1">
    <molecule id="P35241-1"/>
    <property type="nucleotide sequence ID" value="XM_054369600.1"/>
</dbReference>
<dbReference type="SMR" id="P35241"/>
<dbReference type="BioGRID" id="111894">
    <property type="interactions" value="294"/>
</dbReference>
<dbReference type="CORUM" id="P35241"/>
<dbReference type="FunCoup" id="P35241">
    <property type="interactions" value="935"/>
</dbReference>
<dbReference type="IntAct" id="P35241">
    <property type="interactions" value="80"/>
</dbReference>
<dbReference type="MINT" id="P35241"/>
<dbReference type="STRING" id="9606.ENSP00000496414"/>
<dbReference type="DrugBank" id="DB03401">
    <property type="generic name" value="1D-myo-inositol 1,4,5-trisphosphate"/>
</dbReference>
<dbReference type="GlyGen" id="P35241">
    <property type="glycosylation" value="2 sites, 1 O-linked glycan (2 sites)"/>
</dbReference>
<dbReference type="iPTMnet" id="P35241"/>
<dbReference type="MetOSite" id="P35241"/>
<dbReference type="PhosphoSitePlus" id="P35241"/>
<dbReference type="SwissPalm" id="P35241"/>
<dbReference type="BioMuta" id="RDX"/>
<dbReference type="DMDM" id="464541"/>
<dbReference type="jPOST" id="P35241"/>
<dbReference type="MassIVE" id="P35241"/>
<dbReference type="PaxDb" id="9606-ENSP00000384136"/>
<dbReference type="PeptideAtlas" id="P35241"/>
<dbReference type="PRIDE" id="P35241"/>
<dbReference type="ProteomicsDB" id="1819"/>
<dbReference type="ProteomicsDB" id="1820"/>
<dbReference type="ProteomicsDB" id="1821"/>
<dbReference type="ProteomicsDB" id="25595"/>
<dbReference type="ProteomicsDB" id="55009">
    <molecule id="P35241-1"/>
</dbReference>
<dbReference type="Pumba" id="P35241"/>
<dbReference type="Antibodypedia" id="633">
    <property type="antibodies" value="451 antibodies from 38 providers"/>
</dbReference>
<dbReference type="DNASU" id="5962"/>
<dbReference type="Ensembl" id="ENST00000528498.5">
    <molecule id="P35241-5"/>
    <property type="protein sequence ID" value="ENSP00000432112.1"/>
    <property type="gene ID" value="ENSG00000137710.17"/>
</dbReference>
<dbReference type="Ensembl" id="ENST00000528900.5">
    <molecule id="P35241-2"/>
    <property type="protein sequence ID" value="ENSP00000433580.1"/>
    <property type="gene ID" value="ENSG00000137710.17"/>
</dbReference>
<dbReference type="Ensembl" id="ENST00000530301.5">
    <molecule id="P35241-3"/>
    <property type="protein sequence ID" value="ENSP00000436277.1"/>
    <property type="gene ID" value="ENSG00000137710.17"/>
</dbReference>
<dbReference type="Ensembl" id="ENST00000530749.5">
    <molecule id="P35241-5"/>
    <property type="protein sequence ID" value="ENSP00000437301.1"/>
    <property type="gene ID" value="ENSG00000137710.17"/>
</dbReference>
<dbReference type="Ensembl" id="ENST00000544551.5">
    <molecule id="P35241-4"/>
    <property type="protein sequence ID" value="ENSP00000445826.1"/>
    <property type="gene ID" value="ENSG00000137710.17"/>
</dbReference>
<dbReference type="Ensembl" id="ENST00000645495.2">
    <molecule id="P35241-1"/>
    <property type="protein sequence ID" value="ENSP00000496503.2"/>
    <property type="gene ID" value="ENSG00000137710.17"/>
</dbReference>
<dbReference type="Ensembl" id="ENST00000647231.1">
    <molecule id="P35241-5"/>
    <property type="protein sequence ID" value="ENSP00000496414.1"/>
    <property type="gene ID" value="ENSG00000137710.17"/>
</dbReference>
<dbReference type="GeneID" id="5962"/>
<dbReference type="KEGG" id="hsa:5962"/>
<dbReference type="MANE-Select" id="ENST00000645495.2">
    <property type="protein sequence ID" value="ENSP00000496503.2"/>
    <property type="RefSeq nucleotide sequence ID" value="NM_002906.4"/>
    <property type="RefSeq protein sequence ID" value="NP_002897.1"/>
</dbReference>
<dbReference type="UCSC" id="uc001pku.4">
    <molecule id="P35241-1"/>
    <property type="organism name" value="human"/>
</dbReference>
<dbReference type="AGR" id="HGNC:9944"/>
<dbReference type="CTD" id="5962"/>
<dbReference type="DisGeNET" id="5962"/>
<dbReference type="GeneCards" id="RDX"/>
<dbReference type="GeneReviews" id="RDX"/>
<dbReference type="HGNC" id="HGNC:9944">
    <property type="gene designation" value="RDX"/>
</dbReference>
<dbReference type="HPA" id="ENSG00000137710">
    <property type="expression patterns" value="Tissue enhanced (adrenal)"/>
</dbReference>
<dbReference type="MalaCards" id="RDX"/>
<dbReference type="MIM" id="179410">
    <property type="type" value="gene"/>
</dbReference>
<dbReference type="MIM" id="611022">
    <property type="type" value="phenotype"/>
</dbReference>
<dbReference type="neXtProt" id="NX_P35241"/>
<dbReference type="OpenTargets" id="ENSG00000137710"/>
<dbReference type="Orphanet" id="90636">
    <property type="disease" value="Rare autosomal recessive non-syndromic sensorineural deafness type DFNB"/>
</dbReference>
<dbReference type="PharmGKB" id="PA34311"/>
<dbReference type="VEuPathDB" id="HostDB:ENSG00000137710"/>
<dbReference type="eggNOG" id="KOG3529">
    <property type="taxonomic scope" value="Eukaryota"/>
</dbReference>
<dbReference type="GeneTree" id="ENSGT01090000260082"/>
<dbReference type="HOGENOM" id="CLU_1081673_0_0_1"/>
<dbReference type="InParanoid" id="P35241"/>
<dbReference type="OMA" id="HEMERSH"/>
<dbReference type="OrthoDB" id="6018897at2759"/>
<dbReference type="PAN-GO" id="P35241">
    <property type="GO annotations" value="11 GO annotations based on evolutionary models"/>
</dbReference>
<dbReference type="PhylomeDB" id="P35241"/>
<dbReference type="TreeFam" id="TF313935"/>
<dbReference type="PathwayCommons" id="P35241"/>
<dbReference type="Reactome" id="R-HSA-437239">
    <property type="pathway name" value="Recycling pathway of L1"/>
</dbReference>
<dbReference type="Reactome" id="R-HSA-9662360">
    <property type="pathway name" value="Sensory processing of sound by inner hair cells of the cochlea"/>
</dbReference>
<dbReference type="Reactome" id="R-HSA-9662361">
    <property type="pathway name" value="Sensory processing of sound by outer hair cells of the cochlea"/>
</dbReference>
<dbReference type="SignaLink" id="P35241"/>
<dbReference type="SIGNOR" id="P35241"/>
<dbReference type="BioGRID-ORCS" id="5962">
    <property type="hits" value="10 hits in 1155 CRISPR screens"/>
</dbReference>
<dbReference type="CD-CODE" id="FB4E32DD">
    <property type="entry name" value="Presynaptic clusters and postsynaptic densities"/>
</dbReference>
<dbReference type="ChiTaRS" id="RDX">
    <property type="organism name" value="human"/>
</dbReference>
<dbReference type="GeneWiki" id="Radixin"/>
<dbReference type="GenomeRNAi" id="5962"/>
<dbReference type="Pharos" id="P35241">
    <property type="development level" value="Tbio"/>
</dbReference>
<dbReference type="PRO" id="PR:P35241"/>
<dbReference type="Proteomes" id="UP000005640">
    <property type="component" value="Chromosome 11"/>
</dbReference>
<dbReference type="RNAct" id="P35241">
    <property type="molecule type" value="protein"/>
</dbReference>
<dbReference type="Bgee" id="ENSG00000137710">
    <property type="expression patterns" value="Expressed in adrenal tissue and 214 other cell types or tissues"/>
</dbReference>
<dbReference type="ExpressionAtlas" id="P35241">
    <property type="expression patterns" value="baseline and differential"/>
</dbReference>
<dbReference type="GO" id="GO:0005912">
    <property type="term" value="C:adherens junction"/>
    <property type="evidence" value="ECO:0000318"/>
    <property type="project" value="GO_Central"/>
</dbReference>
<dbReference type="GO" id="GO:0045177">
    <property type="term" value="C:apical part of cell"/>
    <property type="evidence" value="ECO:0000318"/>
    <property type="project" value="GO_Central"/>
</dbReference>
<dbReference type="GO" id="GO:0016324">
    <property type="term" value="C:apical plasma membrane"/>
    <property type="evidence" value="ECO:0000314"/>
    <property type="project" value="UniProtKB"/>
</dbReference>
<dbReference type="GO" id="GO:0071944">
    <property type="term" value="C:cell periphery"/>
    <property type="evidence" value="ECO:0000314"/>
    <property type="project" value="UniProtKB"/>
</dbReference>
<dbReference type="GO" id="GO:0051286">
    <property type="term" value="C:cell tip"/>
    <property type="evidence" value="ECO:0007669"/>
    <property type="project" value="Ensembl"/>
</dbReference>
<dbReference type="GO" id="GO:0032154">
    <property type="term" value="C:cleavage furrow"/>
    <property type="evidence" value="ECO:0007669"/>
    <property type="project" value="UniProtKB-SubCell"/>
</dbReference>
<dbReference type="GO" id="GO:0030864">
    <property type="term" value="C:cortical actin cytoskeleton"/>
    <property type="evidence" value="ECO:0000250"/>
    <property type="project" value="UniProtKB"/>
</dbReference>
<dbReference type="GO" id="GO:0070062">
    <property type="term" value="C:extracellular exosome"/>
    <property type="evidence" value="ECO:0007005"/>
    <property type="project" value="UniProtKB"/>
</dbReference>
<dbReference type="GO" id="GO:0005615">
    <property type="term" value="C:extracellular space"/>
    <property type="evidence" value="ECO:0007005"/>
    <property type="project" value="UniProtKB"/>
</dbReference>
<dbReference type="GO" id="GO:0030175">
    <property type="term" value="C:filopodium"/>
    <property type="evidence" value="ECO:0000250"/>
    <property type="project" value="UniProtKB"/>
</dbReference>
<dbReference type="GO" id="GO:0005925">
    <property type="term" value="C:focal adhesion"/>
    <property type="evidence" value="ECO:0007005"/>
    <property type="project" value="UniProtKB"/>
</dbReference>
<dbReference type="GO" id="GO:0030027">
    <property type="term" value="C:lamellipodium"/>
    <property type="evidence" value="ECO:0000250"/>
    <property type="project" value="UniProtKB"/>
</dbReference>
<dbReference type="GO" id="GO:0005902">
    <property type="term" value="C:microvillus"/>
    <property type="evidence" value="ECO:0000250"/>
    <property type="project" value="UniProtKB"/>
</dbReference>
<dbReference type="GO" id="GO:0030496">
    <property type="term" value="C:midbody"/>
    <property type="evidence" value="ECO:0007669"/>
    <property type="project" value="Ensembl"/>
</dbReference>
<dbReference type="GO" id="GO:0005886">
    <property type="term" value="C:plasma membrane"/>
    <property type="evidence" value="ECO:0000314"/>
    <property type="project" value="HPA"/>
</dbReference>
<dbReference type="GO" id="GO:0001726">
    <property type="term" value="C:ruffle"/>
    <property type="evidence" value="ECO:0007669"/>
    <property type="project" value="Ensembl"/>
</dbReference>
<dbReference type="GO" id="GO:0120044">
    <property type="term" value="C:stereocilium base"/>
    <property type="evidence" value="ECO:0000250"/>
    <property type="project" value="UniProtKB"/>
</dbReference>
<dbReference type="GO" id="GO:0030315">
    <property type="term" value="C:T-tubule"/>
    <property type="evidence" value="ECO:0007669"/>
    <property type="project" value="Ensembl"/>
</dbReference>
<dbReference type="GO" id="GO:0003779">
    <property type="term" value="F:actin binding"/>
    <property type="evidence" value="ECO:0000314"/>
    <property type="project" value="UniProtKB"/>
</dbReference>
<dbReference type="GO" id="GO:0051117">
    <property type="term" value="F:ATPase binding"/>
    <property type="evidence" value="ECO:0000353"/>
    <property type="project" value="UniProtKB"/>
</dbReference>
<dbReference type="GO" id="GO:0045296">
    <property type="term" value="F:cadherin binding"/>
    <property type="evidence" value="ECO:0007005"/>
    <property type="project" value="BHF-UCL"/>
</dbReference>
<dbReference type="GO" id="GO:0050839">
    <property type="term" value="F:cell adhesion molecule binding"/>
    <property type="evidence" value="ECO:0000318"/>
    <property type="project" value="GO_Central"/>
</dbReference>
<dbReference type="GO" id="GO:0019904">
    <property type="term" value="F:protein domain specific binding"/>
    <property type="evidence" value="ECO:0007669"/>
    <property type="project" value="Ensembl"/>
</dbReference>
<dbReference type="GO" id="GO:0051018">
    <property type="term" value="F:protein kinase A binding"/>
    <property type="evidence" value="ECO:0000250"/>
    <property type="project" value="UniProtKB"/>
</dbReference>
<dbReference type="GO" id="GO:0003723">
    <property type="term" value="F:RNA binding"/>
    <property type="evidence" value="ECO:0007005"/>
    <property type="project" value="UniProtKB"/>
</dbReference>
<dbReference type="GO" id="GO:0045176">
    <property type="term" value="P:apical protein localization"/>
    <property type="evidence" value="ECO:0007669"/>
    <property type="project" value="Ensembl"/>
</dbReference>
<dbReference type="GO" id="GO:0051016">
    <property type="term" value="P:barbed-end actin filament capping"/>
    <property type="evidence" value="ECO:0007669"/>
    <property type="project" value="Ensembl"/>
</dbReference>
<dbReference type="GO" id="GO:0036120">
    <property type="term" value="P:cellular response to platelet-derived growth factor stimulus"/>
    <property type="evidence" value="ECO:0007669"/>
    <property type="project" value="Ensembl"/>
</dbReference>
<dbReference type="GO" id="GO:0097067">
    <property type="term" value="P:cellular response to thyroid hormone stimulus"/>
    <property type="evidence" value="ECO:0000250"/>
    <property type="project" value="UniProtKB"/>
</dbReference>
<dbReference type="GO" id="GO:0061028">
    <property type="term" value="P:establishment of endothelial barrier"/>
    <property type="evidence" value="ECO:0000316"/>
    <property type="project" value="UniProtKB"/>
</dbReference>
<dbReference type="GO" id="GO:0061951">
    <property type="term" value="P:establishment of protein localization to plasma membrane"/>
    <property type="evidence" value="ECO:0000250"/>
    <property type="project" value="UniProtKB"/>
</dbReference>
<dbReference type="GO" id="GO:0030033">
    <property type="term" value="P:microvillus assembly"/>
    <property type="evidence" value="ECO:0007669"/>
    <property type="project" value="Ensembl"/>
</dbReference>
<dbReference type="GO" id="GO:1903392">
    <property type="term" value="P:negative regulation of adherens junction organization"/>
    <property type="evidence" value="ECO:0000315"/>
    <property type="project" value="UniProtKB"/>
</dbReference>
<dbReference type="GO" id="GO:0045792">
    <property type="term" value="P:negative regulation of cell size"/>
    <property type="evidence" value="ECO:0000315"/>
    <property type="project" value="UniProtKB"/>
</dbReference>
<dbReference type="GO" id="GO:0034260">
    <property type="term" value="P:negative regulation of GTPase activity"/>
    <property type="evidence" value="ECO:0000315"/>
    <property type="project" value="UniProtKB"/>
</dbReference>
<dbReference type="GO" id="GO:0034111">
    <property type="term" value="P:negative regulation of homotypic cell-cell adhesion"/>
    <property type="evidence" value="ECO:0000315"/>
    <property type="project" value="UniProtKB"/>
</dbReference>
<dbReference type="GO" id="GO:0030335">
    <property type="term" value="P:positive regulation of cell migration"/>
    <property type="evidence" value="ECO:0000315"/>
    <property type="project" value="UniProtKB"/>
</dbReference>
<dbReference type="GO" id="GO:2000643">
    <property type="term" value="P:positive regulation of early endosome to late endosome transport"/>
    <property type="evidence" value="ECO:0000316"/>
    <property type="project" value="UniProtKB"/>
</dbReference>
<dbReference type="GO" id="GO:1900087">
    <property type="term" value="P:positive regulation of G1/S transition of mitotic cell cycle"/>
    <property type="evidence" value="ECO:0000250"/>
    <property type="project" value="UniProtKB"/>
</dbReference>
<dbReference type="GO" id="GO:0010628">
    <property type="term" value="P:positive regulation of gene expression"/>
    <property type="evidence" value="ECO:0000316"/>
    <property type="project" value="UniProtKB"/>
</dbReference>
<dbReference type="GO" id="GO:0045732">
    <property type="term" value="P:positive regulation of protein catabolic process"/>
    <property type="evidence" value="ECO:0000316"/>
    <property type="project" value="UniProtKB"/>
</dbReference>
<dbReference type="GO" id="GO:1902966">
    <property type="term" value="P:positive regulation of protein localization to early endosome"/>
    <property type="evidence" value="ECO:0000316"/>
    <property type="project" value="UniProtKB"/>
</dbReference>
<dbReference type="GO" id="GO:0010737">
    <property type="term" value="P:protein kinase A signaling"/>
    <property type="evidence" value="ECO:0000250"/>
    <property type="project" value="UniProtKB"/>
</dbReference>
<dbReference type="GO" id="GO:0072659">
    <property type="term" value="P:protein localization to plasma membrane"/>
    <property type="evidence" value="ECO:0000315"/>
    <property type="project" value="UniProtKB"/>
</dbReference>
<dbReference type="GO" id="GO:0032231">
    <property type="term" value="P:regulation of actin filament bundle assembly"/>
    <property type="evidence" value="ECO:0000315"/>
    <property type="project" value="UniProtKB"/>
</dbReference>
<dbReference type="GO" id="GO:0008360">
    <property type="term" value="P:regulation of cell shape"/>
    <property type="evidence" value="ECO:0000315"/>
    <property type="project" value="UniProtKB"/>
</dbReference>
<dbReference type="GO" id="GO:0008361">
    <property type="term" value="P:regulation of cell size"/>
    <property type="evidence" value="ECO:0000316"/>
    <property type="project" value="UniProtKB"/>
</dbReference>
<dbReference type="GO" id="GO:0043087">
    <property type="term" value="P:regulation of GTPase activity"/>
    <property type="evidence" value="ECO:0000316"/>
    <property type="project" value="UniProtKB"/>
</dbReference>
<dbReference type="GO" id="GO:1902115">
    <property type="term" value="P:regulation of organelle assembly"/>
    <property type="evidence" value="ECO:0000316"/>
    <property type="project" value="UniProtKB"/>
</dbReference>
<dbReference type="GO" id="GO:0150054">
    <property type="term" value="P:regulation of postsynaptic neurotransmitter receptor diffusion trapping"/>
    <property type="evidence" value="ECO:0007669"/>
    <property type="project" value="Ensembl"/>
</dbReference>
<dbReference type="GO" id="GO:0032487">
    <property type="term" value="P:regulation of Rap protein signal transduction"/>
    <property type="evidence" value="ECO:0000250"/>
    <property type="project" value="UniProtKB"/>
</dbReference>
<dbReference type="GO" id="GO:1900027">
    <property type="term" value="P:regulation of ruffle assembly"/>
    <property type="evidence" value="ECO:0000315"/>
    <property type="project" value="UniProtKB"/>
</dbReference>
<dbReference type="CDD" id="cd14473">
    <property type="entry name" value="FERM_B-lobe"/>
    <property type="match status" value="1"/>
</dbReference>
<dbReference type="CDD" id="cd13194">
    <property type="entry name" value="FERM_C_ERM"/>
    <property type="match status" value="1"/>
</dbReference>
<dbReference type="CDD" id="cd17187">
    <property type="entry name" value="FERM_F1_ERM"/>
    <property type="match status" value="1"/>
</dbReference>
<dbReference type="FunFam" id="2.30.29.30:FF:000003">
    <property type="entry name" value="Radixin isoform 1"/>
    <property type="match status" value="1"/>
</dbReference>
<dbReference type="FunFam" id="1.20.80.10:FF:000002">
    <property type="entry name" value="radixin isoform X1"/>
    <property type="match status" value="1"/>
</dbReference>
<dbReference type="FunFam" id="3.10.20.90:FF:000013">
    <property type="entry name" value="radixin isoform X1"/>
    <property type="match status" value="1"/>
</dbReference>
<dbReference type="FunFam" id="1.20.5.450:FF:000001">
    <property type="entry name" value="radixin isoform X2"/>
    <property type="match status" value="1"/>
</dbReference>
<dbReference type="Gene3D" id="1.20.5.450">
    <property type="match status" value="1"/>
</dbReference>
<dbReference type="Gene3D" id="1.20.80.10">
    <property type="match status" value="1"/>
</dbReference>
<dbReference type="Gene3D" id="6.10.360.10">
    <property type="match status" value="1"/>
</dbReference>
<dbReference type="Gene3D" id="3.10.20.90">
    <property type="entry name" value="Phosphatidylinositol 3-kinase Catalytic Subunit, Chain A, domain 1"/>
    <property type="match status" value="1"/>
</dbReference>
<dbReference type="Gene3D" id="2.30.29.30">
    <property type="entry name" value="Pleckstrin-homology domain (PH domain)/Phosphotyrosine-binding domain (PTB)"/>
    <property type="match status" value="1"/>
</dbReference>
<dbReference type="InterPro" id="IPR019749">
    <property type="entry name" value="Band_41_domain"/>
</dbReference>
<dbReference type="InterPro" id="IPR011174">
    <property type="entry name" value="ERM"/>
</dbReference>
<dbReference type="InterPro" id="IPR011259">
    <property type="entry name" value="ERM_C_dom"/>
</dbReference>
<dbReference type="InterPro" id="IPR041789">
    <property type="entry name" value="ERM_FERM_C"/>
</dbReference>
<dbReference type="InterPro" id="IPR046810">
    <property type="entry name" value="ERM_helical"/>
</dbReference>
<dbReference type="InterPro" id="IPR000798">
    <property type="entry name" value="Ez/rad/moesin-like"/>
</dbReference>
<dbReference type="InterPro" id="IPR014352">
    <property type="entry name" value="FERM/acyl-CoA-bd_prot_sf"/>
</dbReference>
<dbReference type="InterPro" id="IPR035963">
    <property type="entry name" value="FERM_2"/>
</dbReference>
<dbReference type="InterPro" id="IPR019748">
    <property type="entry name" value="FERM_central"/>
</dbReference>
<dbReference type="InterPro" id="IPR019747">
    <property type="entry name" value="FERM_CS"/>
</dbReference>
<dbReference type="InterPro" id="IPR000299">
    <property type="entry name" value="FERM_domain"/>
</dbReference>
<dbReference type="InterPro" id="IPR018979">
    <property type="entry name" value="FERM_N"/>
</dbReference>
<dbReference type="InterPro" id="IPR018980">
    <property type="entry name" value="FERM_PH-like_C"/>
</dbReference>
<dbReference type="InterPro" id="IPR008954">
    <property type="entry name" value="Moesin_tail_sf"/>
</dbReference>
<dbReference type="InterPro" id="IPR011993">
    <property type="entry name" value="PH-like_dom_sf"/>
</dbReference>
<dbReference type="InterPro" id="IPR029071">
    <property type="entry name" value="Ubiquitin-like_domsf"/>
</dbReference>
<dbReference type="PANTHER" id="PTHR23281">
    <property type="entry name" value="MERLIN/MOESIN/EZRIN/RADIXIN"/>
    <property type="match status" value="1"/>
</dbReference>
<dbReference type="Pfam" id="PF00769">
    <property type="entry name" value="ERM_C"/>
    <property type="match status" value="1"/>
</dbReference>
<dbReference type="Pfam" id="PF20492">
    <property type="entry name" value="ERM_helical"/>
    <property type="match status" value="1"/>
</dbReference>
<dbReference type="Pfam" id="PF09380">
    <property type="entry name" value="FERM_C"/>
    <property type="match status" value="1"/>
</dbReference>
<dbReference type="Pfam" id="PF00373">
    <property type="entry name" value="FERM_M"/>
    <property type="match status" value="1"/>
</dbReference>
<dbReference type="Pfam" id="PF09379">
    <property type="entry name" value="FERM_N"/>
    <property type="match status" value="1"/>
</dbReference>
<dbReference type="PIRSF" id="PIRSF002305">
    <property type="entry name" value="ERM"/>
    <property type="match status" value="1"/>
</dbReference>
<dbReference type="PRINTS" id="PR00935">
    <property type="entry name" value="BAND41"/>
</dbReference>
<dbReference type="PRINTS" id="PR00661">
    <property type="entry name" value="ERMFAMILY"/>
</dbReference>
<dbReference type="SMART" id="SM00295">
    <property type="entry name" value="B41"/>
    <property type="match status" value="1"/>
</dbReference>
<dbReference type="SMART" id="SM01196">
    <property type="entry name" value="FERM_C"/>
    <property type="match status" value="1"/>
</dbReference>
<dbReference type="SUPFAM" id="SSF48678">
    <property type="entry name" value="Moesin tail domain"/>
    <property type="match status" value="1"/>
</dbReference>
<dbReference type="SUPFAM" id="SSF50729">
    <property type="entry name" value="PH domain-like"/>
    <property type="match status" value="1"/>
</dbReference>
<dbReference type="SUPFAM" id="SSF47031">
    <property type="entry name" value="Second domain of FERM"/>
    <property type="match status" value="1"/>
</dbReference>
<dbReference type="SUPFAM" id="SSF54236">
    <property type="entry name" value="Ubiquitin-like"/>
    <property type="match status" value="1"/>
</dbReference>
<dbReference type="PROSITE" id="PS00660">
    <property type="entry name" value="FERM_1"/>
    <property type="match status" value="1"/>
</dbReference>
<dbReference type="PROSITE" id="PS00661">
    <property type="entry name" value="FERM_2"/>
    <property type="match status" value="1"/>
</dbReference>
<dbReference type="PROSITE" id="PS50057">
    <property type="entry name" value="FERM_3"/>
    <property type="match status" value="1"/>
</dbReference>
<proteinExistence type="evidence at protein level"/>
<feature type="chain" id="PRO_0000219421" description="Radixin">
    <location>
        <begin position="1"/>
        <end position="583"/>
    </location>
</feature>
<feature type="domain" description="FERM" evidence="3">
    <location>
        <begin position="5"/>
        <end position="295"/>
    </location>
</feature>
<feature type="region of interest" description="Disordered" evidence="4">
    <location>
        <begin position="310"/>
        <end position="330"/>
    </location>
</feature>
<feature type="region of interest" description="Disordered" evidence="4">
    <location>
        <begin position="376"/>
        <end position="407"/>
    </location>
</feature>
<feature type="region of interest" description="Disordered" evidence="4">
    <location>
        <begin position="462"/>
        <end position="526"/>
    </location>
</feature>
<feature type="compositionally biased region" description="Basic and acidic residues" evidence="4">
    <location>
        <begin position="376"/>
        <end position="400"/>
    </location>
</feature>
<feature type="compositionally biased region" description="Pro residues" evidence="4">
    <location>
        <begin position="469"/>
        <end position="480"/>
    </location>
</feature>
<feature type="compositionally biased region" description="Basic and acidic residues" evidence="4">
    <location>
        <begin position="483"/>
        <end position="492"/>
    </location>
</feature>
<feature type="compositionally biased region" description="Basic and acidic residues" evidence="4">
    <location>
        <begin position="506"/>
        <end position="525"/>
    </location>
</feature>
<feature type="binding site" evidence="1">
    <location>
        <begin position="60"/>
        <end position="63"/>
    </location>
    <ligand>
        <name>a 1,2-diacyl-sn-glycero-3-phospho-(1D-myo-inositol)</name>
        <dbReference type="ChEBI" id="CHEBI:57880"/>
    </ligand>
</feature>
<feature type="binding site" evidence="1">
    <location>
        <position position="278"/>
    </location>
    <ligand>
        <name>a 1,2-diacyl-sn-glycero-3-phospho-(1D-myo-inositol)</name>
        <dbReference type="ChEBI" id="CHEBI:57880"/>
    </ligand>
</feature>
<feature type="modified residue" description="N6-succinyllysine" evidence="2">
    <location>
        <position position="83"/>
    </location>
</feature>
<feature type="modified residue" description="Phosphothreonine; by ROCK2" evidence="2">
    <location>
        <position position="564"/>
    </location>
</feature>
<feature type="splice variant" id="VSP_045315" description="In isoform 2." evidence="9">
    <location>
        <begin position="1"/>
        <end position="347"/>
    </location>
</feature>
<feature type="splice variant" id="VSP_047276" description="In isoform 4." evidence="8">
    <original>MPKPINVRVTTMDAELEFAIQPNTTGKQLFDQVVKTVGLREVWFFGLQYVDSKGYSTWLKLNKKVTQQDVKKENPLQFKFRAKFFPEDVSEELIQEITQRLFFLQVKEAILNDEIYCPPETAVLLASYAVQAKYGDYNKEIHKPGYLANDRLLPQR</original>
    <variation>MLSWNLPFSPIQLANNFLTS</variation>
    <location>
        <begin position="1"/>
        <end position="156"/>
    </location>
</feature>
<feature type="splice variant" id="VSP_045316" description="In isoform 3." evidence="9">
    <location>
        <begin position="33"/>
        <end position="64"/>
    </location>
</feature>
<feature type="splice variant" id="VSP_045317" description="In isoform 3." evidence="9">
    <location>
        <begin position="168"/>
        <end position="539"/>
    </location>
</feature>
<feature type="splice variant" id="VSP_045318" description="In isoform 2, isoform 3 and isoform 5." evidence="9">
    <original>M</original>
    <variation>MWGPKLYALFQMRSCQSSIKQM</variation>
    <location>
        <position position="583"/>
    </location>
</feature>
<feature type="sequence variant" id="VAR_036857" description="In dbSNP:rs17854427." evidence="5">
    <original>K</original>
    <variation>E</variation>
    <location>
        <position position="328"/>
    </location>
</feature>
<feature type="sequence variant" id="VAR_036858" description="In dbSNP:rs34471100.">
    <original>D</original>
    <variation>N</variation>
    <location>
        <position position="490"/>
    </location>
</feature>
<feature type="sequence variant" id="VAR_036859" description="In DFNB24; dbSNP:rs121918379." evidence="6">
    <original>D</original>
    <variation>N</variation>
    <location>
        <position position="578"/>
    </location>
</feature>
<feature type="sequence conflict" description="In Ref. 2; BAH14432." evidence="10" ref="2">
    <original>K</original>
    <variation>R</variation>
    <location>
        <position position="435"/>
    </location>
</feature>
<gene>
    <name type="primary">RDX</name>
</gene>
<evidence type="ECO:0000250" key="1"/>
<evidence type="ECO:0000250" key="2">
    <source>
        <dbReference type="UniProtKB" id="P26043"/>
    </source>
</evidence>
<evidence type="ECO:0000255" key="3">
    <source>
        <dbReference type="PROSITE-ProRule" id="PRU00084"/>
    </source>
</evidence>
<evidence type="ECO:0000256" key="4">
    <source>
        <dbReference type="SAM" id="MobiDB-lite"/>
    </source>
</evidence>
<evidence type="ECO:0000269" key="5">
    <source>
    </source>
</evidence>
<evidence type="ECO:0000269" key="6">
    <source>
    </source>
</evidence>
<evidence type="ECO:0000269" key="7">
    <source>
    </source>
</evidence>
<evidence type="ECO:0000303" key="8">
    <source>
    </source>
</evidence>
<evidence type="ECO:0000303" key="9">
    <source>
    </source>
</evidence>
<evidence type="ECO:0000305" key="10"/>
<name>RADI_HUMAN</name>
<comment type="function">
    <text>Probably plays a crucial role in the binding of the barbed end of actin filaments to the plasma membrane.</text>
</comment>
<comment type="activity regulation">
    <text evidence="1">A head-to-tail association, of the N-terminal and C-terminal halves results in a closed conformation (inactive form) which is incapable of actin or membrane-binding.</text>
</comment>
<comment type="subunit">
    <text evidence="2 7">Binds NHERF1 (PubMed:9430655). Interacts with NHERF1, NHERF2, LAYN, MME/NEP and ICAM2. Interacts with CPNE1 (via VWFA domain) and CPNE4 (via VWFA domain). Interacts (via FERM domain) with SPN/CD43 cytoplasmic tail (By similarity). Interacts with CD44 (By similarity). Interacts with CLIC5; may work together in a complex which also includes EZR and MYO6 to stabilize linkages between the plasma membrane and subjacent actin cytoskeleton at the base of stereocilia (By similarity).</text>
</comment>
<comment type="interaction">
    <interactant intactId="EBI-2514878">
        <id>P35241</id>
    </interactant>
    <interactant intactId="EBI-1056902">
        <id>P15311</id>
        <label>EZR</label>
    </interactant>
    <organismsDiffer>false</organismsDiffer>
    <experiments>10</experiments>
</comment>
<comment type="interaction">
    <interactant intactId="EBI-2514878">
        <id>P35241</id>
    </interactant>
    <interactant intactId="EBI-300173">
        <id>P05107</id>
        <label>ITGB2</label>
    </interactant>
    <organismsDiffer>false</organismsDiffer>
    <experiments>2</experiments>
</comment>
<comment type="interaction">
    <interactant intactId="EBI-2514878">
        <id>P35241</id>
    </interactant>
    <interactant intactId="EBI-16427312">
        <id>Q8IZU9</id>
        <label>KIRREL3</label>
    </interactant>
    <organismsDiffer>false</organismsDiffer>
    <experiments>5</experiments>
</comment>
<comment type="interaction">
    <interactant intactId="EBI-2514878">
        <id>P35241</id>
    </interactant>
    <interactant intactId="EBI-25475888">
        <id>PRO_0000449630</id>
        <label>rep</label>
        <dbReference type="UniProtKB" id="P0DTD1"/>
    </interactant>
    <organismsDiffer>true</organismsDiffer>
    <experiments>3</experiments>
</comment>
<comment type="subcellular location">
    <subcellularLocation>
        <location>Cell membrane</location>
        <topology>Peripheral membrane protein</topology>
        <orientation>Cytoplasmic side</orientation>
    </subcellularLocation>
    <subcellularLocation>
        <location>Cytoplasm</location>
        <location>Cytoskeleton</location>
    </subcellularLocation>
    <subcellularLocation>
        <location>Cleavage furrow</location>
    </subcellularLocation>
    <subcellularLocation>
        <location evidence="2">Cell projection</location>
        <location evidence="2">Microvillus</location>
    </subcellularLocation>
    <subcellularLocation>
        <location evidence="2">Cell projection</location>
        <location evidence="2">Stereocilium</location>
    </subcellularLocation>
    <text evidence="2">Enriched at the stereocilium base with very low levels in the shaft of stereociliary bundles (By similarity). Highly concentrated in the undercoat of the cell-to-cell adherens junction and the cleavage furrow in the interphase and mitotic phase, respectively.</text>
</comment>
<comment type="alternative products">
    <event type="alternative splicing"/>
    <isoform>
        <id>P35241-1</id>
        <name>1</name>
        <sequence type="displayed"/>
    </isoform>
    <isoform>
        <id>P35241-2</id>
        <name>2</name>
        <sequence type="described" ref="VSP_045315 VSP_045318"/>
    </isoform>
    <isoform>
        <id>P35241-3</id>
        <name>3</name>
        <sequence type="described" ref="VSP_045316 VSP_045317 VSP_045318"/>
    </isoform>
    <isoform>
        <id>P35241-4</id>
        <name>4</name>
        <sequence type="described" ref="VSP_047276"/>
    </isoform>
    <isoform>
        <id>P35241-5</id>
        <name>5</name>
        <sequence type="described" ref="VSP_045318"/>
    </isoform>
</comment>
<comment type="domain">
    <text evidence="1">The N-terminal domain interacts with the C-terminal domain of LAYN. An interdomain interaction between its N-terminal and C-terminal domains inhibits its ability to bind LAYN. In the presence of acidic phospholipids, the interdomain interaction is inhibited and this enhances binding to LAYN (By similarity).</text>
</comment>
<comment type="PTM">
    <text evidence="1">Phosphorylated by tyrosine-protein kinases. Phosphorylation by ROCK2 suppresses the head-to-tail association of the N-terminal and C-terminal halves resulting in an opened conformation which is capable of actin and membrane-binding (By similarity).</text>
</comment>
<comment type="disease" evidence="6">
    <disease id="DI-02066">
        <name>Deafness, autosomal recessive, 24</name>
        <acronym>DFNB24</acronym>
        <description>A form of non-syndromic sensorineural hearing loss. Sensorineural deafness results from damage to the neural receptors of the inner ear, the nerve pathways to the brain, or the area of the brain that receives sound information.</description>
        <dbReference type="MIM" id="611022"/>
    </disease>
    <text>The disease is caused by variants affecting the gene represented in this entry.</text>
</comment>
<protein>
    <recommendedName>
        <fullName>Radixin</fullName>
    </recommendedName>
</protein>
<organism>
    <name type="scientific">Homo sapiens</name>
    <name type="common">Human</name>
    <dbReference type="NCBI Taxonomy" id="9606"/>
    <lineage>
        <taxon>Eukaryota</taxon>
        <taxon>Metazoa</taxon>
        <taxon>Chordata</taxon>
        <taxon>Craniata</taxon>
        <taxon>Vertebrata</taxon>
        <taxon>Euteleostomi</taxon>
        <taxon>Mammalia</taxon>
        <taxon>Eutheria</taxon>
        <taxon>Euarchontoglires</taxon>
        <taxon>Primates</taxon>
        <taxon>Haplorrhini</taxon>
        <taxon>Catarrhini</taxon>
        <taxon>Hominidae</taxon>
        <taxon>Homo</taxon>
    </lineage>
</organism>
<reference key="1">
    <citation type="journal article" date="1993" name="Genomics">
        <title>Molecular cloning, cDNA sequence, and chromosomal assignment of the human radixin gene and two dispersed pseudogenes.</title>
        <authorList>
            <person name="Wilgenbus K.K."/>
            <person name="Milatovich A."/>
            <person name="Francke U."/>
            <person name="Furthmayr H."/>
        </authorList>
    </citation>
    <scope>NUCLEOTIDE SEQUENCE [MRNA] (ISOFORM 1)</scope>
    <source>
        <tissue>Liver</tissue>
    </source>
</reference>
<reference key="2">
    <citation type="journal article" date="2004" name="Nat. Genet.">
        <title>Complete sequencing and characterization of 21,243 full-length human cDNAs.</title>
        <authorList>
            <person name="Ota T."/>
            <person name="Suzuki Y."/>
            <person name="Nishikawa T."/>
            <person name="Otsuki T."/>
            <person name="Sugiyama T."/>
            <person name="Irie R."/>
            <person name="Wakamatsu A."/>
            <person name="Hayashi K."/>
            <person name="Sato H."/>
            <person name="Nagai K."/>
            <person name="Kimura K."/>
            <person name="Makita H."/>
            <person name="Sekine M."/>
            <person name="Obayashi M."/>
            <person name="Nishi T."/>
            <person name="Shibahara T."/>
            <person name="Tanaka T."/>
            <person name="Ishii S."/>
            <person name="Yamamoto J."/>
            <person name="Saito K."/>
            <person name="Kawai Y."/>
            <person name="Isono Y."/>
            <person name="Nakamura Y."/>
            <person name="Nagahari K."/>
            <person name="Murakami K."/>
            <person name="Yasuda T."/>
            <person name="Iwayanagi T."/>
            <person name="Wagatsuma M."/>
            <person name="Shiratori A."/>
            <person name="Sudo H."/>
            <person name="Hosoiri T."/>
            <person name="Kaku Y."/>
            <person name="Kodaira H."/>
            <person name="Kondo H."/>
            <person name="Sugawara M."/>
            <person name="Takahashi M."/>
            <person name="Kanda K."/>
            <person name="Yokoi T."/>
            <person name="Furuya T."/>
            <person name="Kikkawa E."/>
            <person name="Omura Y."/>
            <person name="Abe K."/>
            <person name="Kamihara K."/>
            <person name="Katsuta N."/>
            <person name="Sato K."/>
            <person name="Tanikawa M."/>
            <person name="Yamazaki M."/>
            <person name="Ninomiya K."/>
            <person name="Ishibashi T."/>
            <person name="Yamashita H."/>
            <person name="Murakawa K."/>
            <person name="Fujimori K."/>
            <person name="Tanai H."/>
            <person name="Kimata M."/>
            <person name="Watanabe M."/>
            <person name="Hiraoka S."/>
            <person name="Chiba Y."/>
            <person name="Ishida S."/>
            <person name="Ono Y."/>
            <person name="Takiguchi S."/>
            <person name="Watanabe S."/>
            <person name="Yosida M."/>
            <person name="Hotuta T."/>
            <person name="Kusano J."/>
            <person name="Kanehori K."/>
            <person name="Takahashi-Fujii A."/>
            <person name="Hara H."/>
            <person name="Tanase T.-O."/>
            <person name="Nomura Y."/>
            <person name="Togiya S."/>
            <person name="Komai F."/>
            <person name="Hara R."/>
            <person name="Takeuchi K."/>
            <person name="Arita M."/>
            <person name="Imose N."/>
            <person name="Musashino K."/>
            <person name="Yuuki H."/>
            <person name="Oshima A."/>
            <person name="Sasaki N."/>
            <person name="Aotsuka S."/>
            <person name="Yoshikawa Y."/>
            <person name="Matsunawa H."/>
            <person name="Ichihara T."/>
            <person name="Shiohata N."/>
            <person name="Sano S."/>
            <person name="Moriya S."/>
            <person name="Momiyama H."/>
            <person name="Satoh N."/>
            <person name="Takami S."/>
            <person name="Terashima Y."/>
            <person name="Suzuki O."/>
            <person name="Nakagawa S."/>
            <person name="Senoh A."/>
            <person name="Mizoguchi H."/>
            <person name="Goto Y."/>
            <person name="Shimizu F."/>
            <person name="Wakebe H."/>
            <person name="Hishigaki H."/>
            <person name="Watanabe T."/>
            <person name="Sugiyama A."/>
            <person name="Takemoto M."/>
            <person name="Kawakami B."/>
            <person name="Yamazaki M."/>
            <person name="Watanabe K."/>
            <person name="Kumagai A."/>
            <person name="Itakura S."/>
            <person name="Fukuzumi Y."/>
            <person name="Fujimori Y."/>
            <person name="Komiyama M."/>
            <person name="Tashiro H."/>
            <person name="Tanigami A."/>
            <person name="Fujiwara T."/>
            <person name="Ono T."/>
            <person name="Yamada K."/>
            <person name="Fujii Y."/>
            <person name="Ozaki K."/>
            <person name="Hirao M."/>
            <person name="Ohmori Y."/>
            <person name="Kawabata A."/>
            <person name="Hikiji T."/>
            <person name="Kobatake N."/>
            <person name="Inagaki H."/>
            <person name="Ikema Y."/>
            <person name="Okamoto S."/>
            <person name="Okitani R."/>
            <person name="Kawakami T."/>
            <person name="Noguchi S."/>
            <person name="Itoh T."/>
            <person name="Shigeta K."/>
            <person name="Senba T."/>
            <person name="Matsumura K."/>
            <person name="Nakajima Y."/>
            <person name="Mizuno T."/>
            <person name="Morinaga M."/>
            <person name="Sasaki M."/>
            <person name="Togashi T."/>
            <person name="Oyama M."/>
            <person name="Hata H."/>
            <person name="Watanabe M."/>
            <person name="Komatsu T."/>
            <person name="Mizushima-Sugano J."/>
            <person name="Satoh T."/>
            <person name="Shirai Y."/>
            <person name="Takahashi Y."/>
            <person name="Nakagawa K."/>
            <person name="Okumura K."/>
            <person name="Nagase T."/>
            <person name="Nomura N."/>
            <person name="Kikuchi H."/>
            <person name="Masuho Y."/>
            <person name="Yamashita R."/>
            <person name="Nakai K."/>
            <person name="Yada T."/>
            <person name="Nakamura Y."/>
            <person name="Ohara O."/>
            <person name="Isogai T."/>
            <person name="Sugano S."/>
        </authorList>
    </citation>
    <scope>NUCLEOTIDE SEQUENCE [LARGE SCALE MRNA] (ISOFORM 4)</scope>
    <source>
        <tissue>Hippocampus</tissue>
    </source>
</reference>
<reference key="3">
    <citation type="journal article" date="2007" name="Hum. Mutat.">
        <title>Mutations of the RDX gene cause nonsyndromic hearing loss at the DFNB24 locus.</title>
        <authorList>
            <person name="Khan S.Y."/>
            <person name="Ahmed Z.M."/>
            <person name="Shabbir M.I."/>
            <person name="Kitajiri S."/>
            <person name="Kalsoom S."/>
            <person name="Tasneem S."/>
            <person name="Shayiq S."/>
            <person name="Ramesh A."/>
            <person name="Srisailpathy S."/>
            <person name="Khan S.N."/>
            <person name="Smith R.J.H."/>
            <person name="Riazuddin S."/>
            <person name="Friedman T.B."/>
            <person name="Riazuddin S."/>
        </authorList>
    </citation>
    <scope>NUCLEOTIDE SEQUENCE [MRNA] (ISOFORMS 2; 3 AND 5)</scope>
    <scope>VARIANT DFNB24 ASN-578</scope>
    <source>
        <tissue>Retina</tissue>
    </source>
</reference>
<reference key="4">
    <citation type="journal article" date="2006" name="Nature">
        <title>Human chromosome 11 DNA sequence and analysis including novel gene identification.</title>
        <authorList>
            <person name="Taylor T.D."/>
            <person name="Noguchi H."/>
            <person name="Totoki Y."/>
            <person name="Toyoda A."/>
            <person name="Kuroki Y."/>
            <person name="Dewar K."/>
            <person name="Lloyd C."/>
            <person name="Itoh T."/>
            <person name="Takeda T."/>
            <person name="Kim D.-W."/>
            <person name="She X."/>
            <person name="Barlow K.F."/>
            <person name="Bloom T."/>
            <person name="Bruford E."/>
            <person name="Chang J.L."/>
            <person name="Cuomo C.A."/>
            <person name="Eichler E."/>
            <person name="FitzGerald M.G."/>
            <person name="Jaffe D.B."/>
            <person name="LaButti K."/>
            <person name="Nicol R."/>
            <person name="Park H.-S."/>
            <person name="Seaman C."/>
            <person name="Sougnez C."/>
            <person name="Yang X."/>
            <person name="Zimmer A.R."/>
            <person name="Zody M.C."/>
            <person name="Birren B.W."/>
            <person name="Nusbaum C."/>
            <person name="Fujiyama A."/>
            <person name="Hattori M."/>
            <person name="Rogers J."/>
            <person name="Lander E.S."/>
            <person name="Sakaki Y."/>
        </authorList>
    </citation>
    <scope>NUCLEOTIDE SEQUENCE [LARGE SCALE GENOMIC DNA]</scope>
</reference>
<reference key="5">
    <citation type="submission" date="2005-07" db="EMBL/GenBank/DDBJ databases">
        <authorList>
            <person name="Mural R.J."/>
            <person name="Istrail S."/>
            <person name="Sutton G.G."/>
            <person name="Florea L."/>
            <person name="Halpern A.L."/>
            <person name="Mobarry C.M."/>
            <person name="Lippert R."/>
            <person name="Walenz B."/>
            <person name="Shatkay H."/>
            <person name="Dew I."/>
            <person name="Miller J.R."/>
            <person name="Flanigan M.J."/>
            <person name="Edwards N.J."/>
            <person name="Bolanos R."/>
            <person name="Fasulo D."/>
            <person name="Halldorsson B.V."/>
            <person name="Hannenhalli S."/>
            <person name="Turner R."/>
            <person name="Yooseph S."/>
            <person name="Lu F."/>
            <person name="Nusskern D.R."/>
            <person name="Shue B.C."/>
            <person name="Zheng X.H."/>
            <person name="Zhong F."/>
            <person name="Delcher A.L."/>
            <person name="Huson D.H."/>
            <person name="Kravitz S.A."/>
            <person name="Mouchard L."/>
            <person name="Reinert K."/>
            <person name="Remington K.A."/>
            <person name="Clark A.G."/>
            <person name="Waterman M.S."/>
            <person name="Eichler E.E."/>
            <person name="Adams M.D."/>
            <person name="Hunkapiller M.W."/>
            <person name="Myers E.W."/>
            <person name="Venter J.C."/>
        </authorList>
    </citation>
    <scope>NUCLEOTIDE SEQUENCE [LARGE SCALE GENOMIC DNA]</scope>
</reference>
<reference key="6">
    <citation type="journal article" date="2004" name="Genome Res.">
        <title>The status, quality, and expansion of the NIH full-length cDNA project: the Mammalian Gene Collection (MGC).</title>
        <authorList>
            <consortium name="The MGC Project Team"/>
        </authorList>
    </citation>
    <scope>NUCLEOTIDE SEQUENCE [LARGE SCALE MRNA] (ISOFORM 1)</scope>
    <scope>VARIANT GLU-328</scope>
    <source>
        <tissue>Brain</tissue>
    </source>
</reference>
<reference key="7">
    <citation type="journal article" date="1998" name="J. Biol. Chem.">
        <title>NHE-RF, a regulatory cofactor for Na(+)-H+ exchange, is a common interactor for merlin and ERM (MERM) proteins.</title>
        <authorList>
            <person name="Murthy A."/>
            <person name="Gonzalez-Agosti C."/>
            <person name="Cordero E."/>
            <person name="Pinney D."/>
            <person name="Candia C."/>
            <person name="Solomon F."/>
            <person name="Gusella J."/>
            <person name="Ramesh V."/>
        </authorList>
    </citation>
    <scope>INTERACTION WITH NHERF1</scope>
</reference>
<reference key="8">
    <citation type="journal article" date="2011" name="BMC Syst. Biol.">
        <title>Initial characterization of the human central proteome.</title>
        <authorList>
            <person name="Burkard T.R."/>
            <person name="Planyavsky M."/>
            <person name="Kaupe I."/>
            <person name="Breitwieser F.P."/>
            <person name="Buerckstuemmer T."/>
            <person name="Bennett K.L."/>
            <person name="Superti-Furga G."/>
            <person name="Colinge J."/>
        </authorList>
    </citation>
    <scope>IDENTIFICATION BY MASS SPECTROMETRY [LARGE SCALE ANALYSIS]</scope>
</reference>
<reference key="9">
    <citation type="journal article" date="2014" name="J. Proteomics">
        <title>An enzyme assisted RP-RPLC approach for in-depth analysis of human liver phosphoproteome.</title>
        <authorList>
            <person name="Bian Y."/>
            <person name="Song C."/>
            <person name="Cheng K."/>
            <person name="Dong M."/>
            <person name="Wang F."/>
            <person name="Huang J."/>
            <person name="Sun D."/>
            <person name="Wang L."/>
            <person name="Ye M."/>
            <person name="Zou H."/>
        </authorList>
    </citation>
    <scope>IDENTIFICATION BY MASS SPECTROMETRY [LARGE SCALE ANALYSIS]</scope>
    <source>
        <tissue>Liver</tissue>
    </source>
</reference>
<keyword id="KW-0117">Actin capping</keyword>
<keyword id="KW-0009">Actin-binding</keyword>
<keyword id="KW-0025">Alternative splicing</keyword>
<keyword id="KW-1003">Cell membrane</keyword>
<keyword id="KW-0966">Cell projection</keyword>
<keyword id="KW-0963">Cytoplasm</keyword>
<keyword id="KW-0206">Cytoskeleton</keyword>
<keyword id="KW-0209">Deafness</keyword>
<keyword id="KW-0225">Disease variant</keyword>
<keyword id="KW-0472">Membrane</keyword>
<keyword id="KW-1010">Non-syndromic deafness</keyword>
<keyword id="KW-0597">Phosphoprotein</keyword>
<keyword id="KW-1267">Proteomics identification</keyword>
<keyword id="KW-1185">Reference proteome</keyword>
<accession>P35241</accession>
<accession>A7YIJ8</accession>
<accession>A7YIK0</accession>
<accession>A7YIK3</accession>
<accession>B7Z9U6</accession>
<accession>F5H1A7</accession>
<accession>Q86Y61</accession>
<sequence length="583" mass="68564">MPKPINVRVTTMDAELEFAIQPNTTGKQLFDQVVKTVGLREVWFFGLQYVDSKGYSTWLKLNKKVTQQDVKKENPLQFKFRAKFFPEDVSEELIQEITQRLFFLQVKEAILNDEIYCPPETAVLLASYAVQAKYGDYNKEIHKPGYLANDRLLPQRVLEQHKLTKEQWEERIQNWHEEHRGMLREDSMMEYLKIAQDLEMYGVNYFEIKNKKGTELWLGVDALGLNIYEHDDKLTPKIGFPWSEIRNISFNDKKFVIKPIDKKAPDFVFYAPRLRINKRILALCMGNHELYMRRRKPDTIEVQQMKAQAREEKHQKQLERAQLENEKKKREIAEKEKERIEREKEELMERLKQIEEQTIKAQKELEEQTRKALELDQERKRAKEEAERLEKERRAAEEAKSAIAKQAADQMKNQEQLAAELAEFTAKIALLEEAKKKKEEEATEWQHKAFAAQEDLEKTKEELKTVMSAPPPPPPPPVIPPTENEHDEHDENNAEASAELSNEGVMNHRSEEERVTETQKNERVKKQLQALSSELAQARDETKKTQNDVLHAENVKAGRDKYKTLRQIRQGNTKQRIDEFEAM</sequence>